<accession>O52163</accession>
<sequence length="338" mass="36976">MLSERRLEVLRAIVQDYVGTEEPVGSKALTERHRLGVSPATVRNDMAALEDEGYIAQPHTSAGPIPTDKGYRLFVDRLADVKPMTAPERRAIHHFLDQAVDLDDVVARTVRLLAHVTRQVAVVQYPSLTRSTVRHVELLSMAPARLMLVLITDTGRVEQRMIDCPAPFGESSVADLRARLNSQVAGRRFADVPQLVQDLPESFESEDRPTVSTVLSTLLETLVEETEERLMIGGTANLTRFGHDFPLTIRPVLEALEEQVVLLKLLGEAKDSAMTVRIGHENAHEGLSSTSVVSVGYGSGREAVAKLGVVGPTRMDYPGTMGAVRAVARYVGQILAES</sequence>
<protein>
    <recommendedName>
        <fullName evidence="1">Heat-inducible transcription repressor HrcA</fullName>
    </recommendedName>
</protein>
<gene>
    <name evidence="1" type="primary">hrcA</name>
</gene>
<evidence type="ECO:0000255" key="1">
    <source>
        <dbReference type="HAMAP-Rule" id="MF_00081"/>
    </source>
</evidence>
<feature type="chain" id="PRO_0000182536" description="Heat-inducible transcription repressor HrcA">
    <location>
        <begin position="1"/>
        <end position="338"/>
    </location>
</feature>
<name>HRCA_STRAL</name>
<comment type="function">
    <text evidence="1">Negative regulator of class I heat shock genes (grpE-dnaK-dnaJ and groELS operons). Prevents heat-shock induction of these operons.</text>
</comment>
<comment type="similarity">
    <text evidence="1">Belongs to the HrcA family.</text>
</comment>
<organism>
    <name type="scientific">Streptomyces albus G</name>
    <dbReference type="NCBI Taxonomy" id="1962"/>
    <lineage>
        <taxon>Bacteria</taxon>
        <taxon>Bacillati</taxon>
        <taxon>Actinomycetota</taxon>
        <taxon>Actinomycetes</taxon>
        <taxon>Kitasatosporales</taxon>
        <taxon>Streptomycetaceae</taxon>
        <taxon>Streptomyces</taxon>
    </lineage>
</organism>
<dbReference type="EMBL" id="AF025656">
    <property type="protein sequence ID" value="AAC62528.1"/>
    <property type="molecule type" value="Genomic_DNA"/>
</dbReference>
<dbReference type="SMR" id="O52163"/>
<dbReference type="GO" id="GO:0003677">
    <property type="term" value="F:DNA binding"/>
    <property type="evidence" value="ECO:0007669"/>
    <property type="project" value="InterPro"/>
</dbReference>
<dbReference type="GO" id="GO:0045892">
    <property type="term" value="P:negative regulation of DNA-templated transcription"/>
    <property type="evidence" value="ECO:0007669"/>
    <property type="project" value="UniProtKB-UniRule"/>
</dbReference>
<dbReference type="FunFam" id="1.10.10.10:FF:000049">
    <property type="entry name" value="Heat-inducible transcription repressor HrcA"/>
    <property type="match status" value="1"/>
</dbReference>
<dbReference type="Gene3D" id="3.30.450.40">
    <property type="match status" value="1"/>
</dbReference>
<dbReference type="Gene3D" id="3.30.390.60">
    <property type="entry name" value="Heat-inducible transcription repressor hrca homolog, domain 3"/>
    <property type="match status" value="1"/>
</dbReference>
<dbReference type="Gene3D" id="1.10.10.10">
    <property type="entry name" value="Winged helix-like DNA-binding domain superfamily/Winged helix DNA-binding domain"/>
    <property type="match status" value="1"/>
</dbReference>
<dbReference type="HAMAP" id="MF_00081">
    <property type="entry name" value="HrcA"/>
    <property type="match status" value="1"/>
</dbReference>
<dbReference type="InterPro" id="IPR029016">
    <property type="entry name" value="GAF-like_dom_sf"/>
</dbReference>
<dbReference type="InterPro" id="IPR002571">
    <property type="entry name" value="HrcA"/>
</dbReference>
<dbReference type="InterPro" id="IPR021153">
    <property type="entry name" value="HrcA_C"/>
</dbReference>
<dbReference type="InterPro" id="IPR036388">
    <property type="entry name" value="WH-like_DNA-bd_sf"/>
</dbReference>
<dbReference type="InterPro" id="IPR036390">
    <property type="entry name" value="WH_DNA-bd_sf"/>
</dbReference>
<dbReference type="InterPro" id="IPR023120">
    <property type="entry name" value="WHTH_transcript_rep_HrcA_IDD"/>
</dbReference>
<dbReference type="NCBIfam" id="TIGR00331">
    <property type="entry name" value="hrcA"/>
    <property type="match status" value="1"/>
</dbReference>
<dbReference type="PANTHER" id="PTHR34824">
    <property type="entry name" value="HEAT-INDUCIBLE TRANSCRIPTION REPRESSOR HRCA"/>
    <property type="match status" value="1"/>
</dbReference>
<dbReference type="PANTHER" id="PTHR34824:SF1">
    <property type="entry name" value="HEAT-INDUCIBLE TRANSCRIPTION REPRESSOR HRCA"/>
    <property type="match status" value="1"/>
</dbReference>
<dbReference type="Pfam" id="PF01628">
    <property type="entry name" value="HrcA"/>
    <property type="match status" value="1"/>
</dbReference>
<dbReference type="PIRSF" id="PIRSF005485">
    <property type="entry name" value="HrcA"/>
    <property type="match status" value="1"/>
</dbReference>
<dbReference type="SUPFAM" id="SSF55781">
    <property type="entry name" value="GAF domain-like"/>
    <property type="match status" value="1"/>
</dbReference>
<dbReference type="SUPFAM" id="SSF46785">
    <property type="entry name" value="Winged helix' DNA-binding domain"/>
    <property type="match status" value="1"/>
</dbReference>
<reference key="1">
    <citation type="journal article" date="1998" name="J. Bacteriol.">
        <title>hrcA, encoding the repressor of the groEL genes in Streptomyces albus G, is associated with a second dnaJ gene.</title>
        <authorList>
            <person name="Grandvalet C."/>
            <person name="Rapoport G."/>
            <person name="Mazodier P."/>
        </authorList>
    </citation>
    <scope>NUCLEOTIDE SEQUENCE [GENOMIC DNA]</scope>
    <source>
        <strain>J1074</strain>
    </source>
</reference>
<keyword id="KW-0678">Repressor</keyword>
<keyword id="KW-0346">Stress response</keyword>
<keyword id="KW-0804">Transcription</keyword>
<keyword id="KW-0805">Transcription regulation</keyword>
<proteinExistence type="inferred from homology"/>